<comment type="function">
    <text evidence="3">Inhibits RpoS proteolysis by regulating RssB activity, thereby increasing the stability of the sigma stress factor RpoS especially during phosphate and magnesium starvation, but also in stationary phase and during nitrogen starvation. Its effect on RpoS stability is due to its interaction with RssB, which probably blocks the interaction of RssB with RpoS, and the consequent delivery of the RssB-RpoS complex to the ClpXP protein degradation pathway.</text>
</comment>
<comment type="subunit">
    <text evidence="1">Interacts with RssB.</text>
</comment>
<comment type="subcellular location">
    <subcellularLocation>
        <location evidence="1">Cytoplasm</location>
    </subcellularLocation>
</comment>
<comment type="induction">
    <text evidence="3">By phosphate starvation and limiting magnesium, via the transcriptional regulator PhoP and the alarmone ppGpp.</text>
</comment>
<comment type="similarity">
    <text evidence="4">Belongs to the IraP family.</text>
</comment>
<comment type="sequence caution" evidence="4">
    <conflict type="erroneous initiation">
        <sequence resource="EMBL-CDS" id="AAL19337"/>
    </conflict>
</comment>
<proteinExistence type="evidence at transcript level"/>
<name>IRAP_SALTY</name>
<evidence type="ECO:0000250" key="1"/>
<evidence type="ECO:0000255" key="2"/>
<evidence type="ECO:0000269" key="3">
    <source>
    </source>
</evidence>
<evidence type="ECO:0000305" key="4"/>
<accession>Q7CR46</accession>
<sequence>MKNLIAELLLKLAQKEEESKELVAQVEALEIIVTAMLRNMAQNEQEMLIRQVEGALEGVKPDASVPDHDTELLRQYVKKLLRHPRH</sequence>
<keyword id="KW-0175">Coiled coil</keyword>
<keyword id="KW-0963">Cytoplasm</keyword>
<keyword id="KW-1185">Reference proteome</keyword>
<keyword id="KW-0346">Stress response</keyword>
<reference key="1">
    <citation type="journal article" date="2001" name="Nature">
        <title>Complete genome sequence of Salmonella enterica serovar Typhimurium LT2.</title>
        <authorList>
            <person name="McClelland M."/>
            <person name="Sanderson K.E."/>
            <person name="Spieth J."/>
            <person name="Clifton S.W."/>
            <person name="Latreille P."/>
            <person name="Courtney L."/>
            <person name="Porwollik S."/>
            <person name="Ali J."/>
            <person name="Dante M."/>
            <person name="Du F."/>
            <person name="Hou S."/>
            <person name="Layman D."/>
            <person name="Leonard S."/>
            <person name="Nguyen C."/>
            <person name="Scott K."/>
            <person name="Holmes A."/>
            <person name="Grewal N."/>
            <person name="Mulvaney E."/>
            <person name="Ryan E."/>
            <person name="Sun H."/>
            <person name="Florea L."/>
            <person name="Miller W."/>
            <person name="Stoneking T."/>
            <person name="Nhan M."/>
            <person name="Waterston R."/>
            <person name="Wilson R.K."/>
        </authorList>
    </citation>
    <scope>NUCLEOTIDE SEQUENCE [LARGE SCALE GENOMIC DNA]</scope>
    <source>
        <strain>LT2 / SGSC1412 / ATCC 700720</strain>
    </source>
</reference>
<reference key="2">
    <citation type="journal article" date="2006" name="Proc. Natl. Acad. Sci. U.S.A.">
        <title>The PhoP/PhoQ two-component system stabilizes the alternative sigma factor RpoS in Salmonella enterica.</title>
        <authorList>
            <person name="Tu X."/>
            <person name="Latifi T."/>
            <person name="Bougdour A."/>
            <person name="Gottesman S."/>
            <person name="Groisman E.A."/>
        </authorList>
    </citation>
    <scope>FUNCTION</scope>
    <scope>INDUCTION</scope>
    <source>
        <strain>ATCC 14028s / SGSG 2262</strain>
    </source>
</reference>
<gene>
    <name type="primary">iraP</name>
    <name type="ordered locus">STM0383</name>
</gene>
<organism>
    <name type="scientific">Salmonella typhimurium (strain LT2 / SGSC1412 / ATCC 700720)</name>
    <dbReference type="NCBI Taxonomy" id="99287"/>
    <lineage>
        <taxon>Bacteria</taxon>
        <taxon>Pseudomonadati</taxon>
        <taxon>Pseudomonadota</taxon>
        <taxon>Gammaproteobacteria</taxon>
        <taxon>Enterobacterales</taxon>
        <taxon>Enterobacteriaceae</taxon>
        <taxon>Salmonella</taxon>
    </lineage>
</organism>
<feature type="chain" id="PRO_0000337863" description="Anti-adapter protein IraP">
    <location>
        <begin position="1"/>
        <end position="86"/>
    </location>
</feature>
<feature type="coiled-coil region" evidence="2">
    <location>
        <begin position="1"/>
        <end position="36"/>
    </location>
</feature>
<protein>
    <recommendedName>
        <fullName>Anti-adapter protein IraP</fullName>
    </recommendedName>
</protein>
<dbReference type="EMBL" id="AE006468">
    <property type="protein sequence ID" value="AAL19337.1"/>
    <property type="status" value="ALT_INIT"/>
    <property type="molecule type" value="Genomic_DNA"/>
</dbReference>
<dbReference type="SMR" id="Q7CR46"/>
<dbReference type="STRING" id="99287.STM0383"/>
<dbReference type="PaxDb" id="99287-STM0383"/>
<dbReference type="DNASU" id="1251902"/>
<dbReference type="KEGG" id="stm:STM0383"/>
<dbReference type="PATRIC" id="fig|99287.12.peg.406"/>
<dbReference type="HOGENOM" id="CLU_169517_0_0_6"/>
<dbReference type="PhylomeDB" id="Q7CR46"/>
<dbReference type="Proteomes" id="UP000001014">
    <property type="component" value="Chromosome"/>
</dbReference>
<dbReference type="GO" id="GO:0005737">
    <property type="term" value="C:cytoplasm"/>
    <property type="evidence" value="ECO:0007669"/>
    <property type="project" value="UniProtKB-SubCell"/>
</dbReference>
<dbReference type="GO" id="GO:0009267">
    <property type="term" value="P:cellular response to starvation"/>
    <property type="evidence" value="ECO:0007669"/>
    <property type="project" value="UniProtKB-UniRule"/>
</dbReference>
<dbReference type="HAMAP" id="MF_01198">
    <property type="entry name" value="Anti_adapt_IraP"/>
    <property type="match status" value="1"/>
</dbReference>
<dbReference type="InterPro" id="IPR019732">
    <property type="entry name" value="SigmaS_Anti-adapt_IraP"/>
</dbReference>
<dbReference type="NCBIfam" id="NF007598">
    <property type="entry name" value="PRK10244.1"/>
    <property type="match status" value="1"/>
</dbReference>
<dbReference type="Pfam" id="PF10796">
    <property type="entry name" value="Anti-adapt_IraP"/>
    <property type="match status" value="1"/>
</dbReference>